<protein>
    <recommendedName>
        <fullName evidence="1">Protein SlyX homolog</fullName>
    </recommendedName>
</protein>
<evidence type="ECO:0000255" key="1">
    <source>
        <dbReference type="HAMAP-Rule" id="MF_00715"/>
    </source>
</evidence>
<accession>Q92KT8</accession>
<sequence>MMRDAEERITRLEETVAHQLKTIEELSDQLAEQWKVVEQTRAKLDRLTERFLSLEEQAQDATPVTRPPHY</sequence>
<organism>
    <name type="scientific">Rhizobium meliloti (strain 1021)</name>
    <name type="common">Ensifer meliloti</name>
    <name type="synonym">Sinorhizobium meliloti</name>
    <dbReference type="NCBI Taxonomy" id="266834"/>
    <lineage>
        <taxon>Bacteria</taxon>
        <taxon>Pseudomonadati</taxon>
        <taxon>Pseudomonadota</taxon>
        <taxon>Alphaproteobacteria</taxon>
        <taxon>Hyphomicrobiales</taxon>
        <taxon>Rhizobiaceae</taxon>
        <taxon>Sinorhizobium/Ensifer group</taxon>
        <taxon>Sinorhizobium</taxon>
    </lineage>
</organism>
<comment type="similarity">
    <text evidence="1">Belongs to the SlyX family.</text>
</comment>
<dbReference type="EMBL" id="AL591688">
    <property type="protein sequence ID" value="CAC41595.1"/>
    <property type="molecule type" value="Genomic_DNA"/>
</dbReference>
<dbReference type="RefSeq" id="NP_384314.1">
    <property type="nucleotide sequence ID" value="NC_003047.1"/>
</dbReference>
<dbReference type="RefSeq" id="WP_010968423.1">
    <property type="nucleotide sequence ID" value="NC_003047.1"/>
</dbReference>
<dbReference type="SMR" id="Q92KT8"/>
<dbReference type="EnsemblBacteria" id="CAC41595">
    <property type="protein sequence ID" value="CAC41595"/>
    <property type="gene ID" value="SMc02883"/>
</dbReference>
<dbReference type="KEGG" id="sme:SMc02883"/>
<dbReference type="PATRIC" id="fig|266834.11.peg.1571"/>
<dbReference type="eggNOG" id="COG2900">
    <property type="taxonomic scope" value="Bacteria"/>
</dbReference>
<dbReference type="HOGENOM" id="CLU_180796_5_0_5"/>
<dbReference type="OrthoDB" id="9803836at2"/>
<dbReference type="Proteomes" id="UP000001976">
    <property type="component" value="Chromosome"/>
</dbReference>
<dbReference type="HAMAP" id="MF_00715">
    <property type="entry name" value="SlyX"/>
    <property type="match status" value="1"/>
</dbReference>
<dbReference type="InterPro" id="IPR007236">
    <property type="entry name" value="SlyX"/>
</dbReference>
<dbReference type="NCBIfam" id="NF001962">
    <property type="entry name" value="PRK00736.1"/>
    <property type="match status" value="1"/>
</dbReference>
<dbReference type="Pfam" id="PF04102">
    <property type="entry name" value="SlyX"/>
    <property type="match status" value="1"/>
</dbReference>
<gene>
    <name evidence="1" type="primary">slyX</name>
    <name type="ordered locus">R00208</name>
    <name type="ORF">SMc02883</name>
</gene>
<feature type="chain" id="PRO_0000209211" description="Protein SlyX homolog">
    <location>
        <begin position="1"/>
        <end position="70"/>
    </location>
</feature>
<proteinExistence type="inferred from homology"/>
<name>SLYX_RHIME</name>
<keyword id="KW-1185">Reference proteome</keyword>
<reference key="1">
    <citation type="journal article" date="2001" name="Proc. Natl. Acad. Sci. U.S.A.">
        <title>Analysis of the chromosome sequence of the legume symbiont Sinorhizobium meliloti strain 1021.</title>
        <authorList>
            <person name="Capela D."/>
            <person name="Barloy-Hubler F."/>
            <person name="Gouzy J."/>
            <person name="Bothe G."/>
            <person name="Ampe F."/>
            <person name="Batut J."/>
            <person name="Boistard P."/>
            <person name="Becker A."/>
            <person name="Boutry M."/>
            <person name="Cadieu E."/>
            <person name="Dreano S."/>
            <person name="Gloux S."/>
            <person name="Godrie T."/>
            <person name="Goffeau A."/>
            <person name="Kahn D."/>
            <person name="Kiss E."/>
            <person name="Lelaure V."/>
            <person name="Masuy D."/>
            <person name="Pohl T."/>
            <person name="Portetelle D."/>
            <person name="Puehler A."/>
            <person name="Purnelle B."/>
            <person name="Ramsperger U."/>
            <person name="Renard C."/>
            <person name="Thebault P."/>
            <person name="Vandenbol M."/>
            <person name="Weidner S."/>
            <person name="Galibert F."/>
        </authorList>
    </citation>
    <scope>NUCLEOTIDE SEQUENCE [LARGE SCALE GENOMIC DNA]</scope>
    <source>
        <strain>1021</strain>
    </source>
</reference>
<reference key="2">
    <citation type="journal article" date="2001" name="Science">
        <title>The composite genome of the legume symbiont Sinorhizobium meliloti.</title>
        <authorList>
            <person name="Galibert F."/>
            <person name="Finan T.M."/>
            <person name="Long S.R."/>
            <person name="Puehler A."/>
            <person name="Abola P."/>
            <person name="Ampe F."/>
            <person name="Barloy-Hubler F."/>
            <person name="Barnett M.J."/>
            <person name="Becker A."/>
            <person name="Boistard P."/>
            <person name="Bothe G."/>
            <person name="Boutry M."/>
            <person name="Bowser L."/>
            <person name="Buhrmester J."/>
            <person name="Cadieu E."/>
            <person name="Capela D."/>
            <person name="Chain P."/>
            <person name="Cowie A."/>
            <person name="Davis R.W."/>
            <person name="Dreano S."/>
            <person name="Federspiel N.A."/>
            <person name="Fisher R.F."/>
            <person name="Gloux S."/>
            <person name="Godrie T."/>
            <person name="Goffeau A."/>
            <person name="Golding B."/>
            <person name="Gouzy J."/>
            <person name="Gurjal M."/>
            <person name="Hernandez-Lucas I."/>
            <person name="Hong A."/>
            <person name="Huizar L."/>
            <person name="Hyman R.W."/>
            <person name="Jones T."/>
            <person name="Kahn D."/>
            <person name="Kahn M.L."/>
            <person name="Kalman S."/>
            <person name="Keating D.H."/>
            <person name="Kiss E."/>
            <person name="Komp C."/>
            <person name="Lelaure V."/>
            <person name="Masuy D."/>
            <person name="Palm C."/>
            <person name="Peck M.C."/>
            <person name="Pohl T.M."/>
            <person name="Portetelle D."/>
            <person name="Purnelle B."/>
            <person name="Ramsperger U."/>
            <person name="Surzycki R."/>
            <person name="Thebault P."/>
            <person name="Vandenbol M."/>
            <person name="Vorhoelter F.J."/>
            <person name="Weidner S."/>
            <person name="Wells D.H."/>
            <person name="Wong K."/>
            <person name="Yeh K.-C."/>
            <person name="Batut J."/>
        </authorList>
    </citation>
    <scope>NUCLEOTIDE SEQUENCE [LARGE SCALE GENOMIC DNA]</scope>
    <source>
        <strain>1021</strain>
    </source>
</reference>